<gene>
    <name type="primary">ghbB2</name>
</gene>
<sequence length="163" mass="17199">MIALFVLMGLMAAASASSCCSSEDRANVMHNWDAAWSAAYSDRRVALAQAVFASLFSRDAAAQGLFSGVSADNPDSADFRAHCVRVVNGLDVAINMLNDPAVLNEQLAHLSAQHQARAGVAAAHFDVMAEAFAEVMPQVSSCFSSDSWNRCFARIANGISAGL</sequence>
<comment type="function">
    <text>The extracellular giant hemoglobin is able to bind and transport oxygen and hydrosulfide simultaneously and reversibly at two different sites.</text>
</comment>
<comment type="subunit">
    <text evidence="3">The 400 kDa hemoglobin consists of a spherical 24-mer arranged as a double layer of dome-shaped dodecamers. Each dodecamer is composed of the 3-fold trimer of the tetramer A1-A2-B1-B2 having one intra-tetramer (A1-B2) disulfide bond and one inter-tetramer (B1-B2) disulfide bond per tetramer.</text>
</comment>
<comment type="subcellular location">
    <subcellularLocation>
        <location>Secreted</location>
    </subcellularLocation>
</comment>
<comment type="similarity">
    <text evidence="1">Belongs to the globin family.</text>
</comment>
<keyword id="KW-0002">3D-structure</keyword>
<keyword id="KW-0903">Direct protein sequencing</keyword>
<keyword id="KW-1015">Disulfide bond</keyword>
<keyword id="KW-0349">Heme</keyword>
<keyword id="KW-0408">Iron</keyword>
<keyword id="KW-0479">Metal-binding</keyword>
<keyword id="KW-0561">Oxygen transport</keyword>
<keyword id="KW-0964">Secreted</keyword>
<keyword id="KW-0732">Signal</keyword>
<keyword id="KW-0813">Transport</keyword>
<evidence type="ECO:0000255" key="1">
    <source>
        <dbReference type="PROSITE-ProRule" id="PRU00238"/>
    </source>
</evidence>
<evidence type="ECO:0000269" key="2">
    <source>
    </source>
</evidence>
<evidence type="ECO:0000269" key="3">
    <source>
    </source>
</evidence>
<evidence type="ECO:0000269" key="4">
    <source>
    </source>
</evidence>
<evidence type="ECO:0000305" key="5"/>
<evidence type="ECO:0007829" key="6">
    <source>
        <dbReference type="PDB" id="2D2M"/>
    </source>
</evidence>
<evidence type="ECO:0007829" key="7">
    <source>
        <dbReference type="PDB" id="2D2N"/>
    </source>
</evidence>
<evidence type="ECO:0007829" key="8">
    <source>
        <dbReference type="PDB" id="7E99"/>
    </source>
</evidence>
<dbReference type="EMBL" id="AB185393">
    <property type="protein sequence ID" value="BAD86544.1"/>
    <property type="molecule type" value="mRNA"/>
</dbReference>
<dbReference type="PIR" id="S72253">
    <property type="entry name" value="S72253"/>
</dbReference>
<dbReference type="PDB" id="2D2M">
    <property type="method" value="X-ray"/>
    <property type="resolution" value="2.85 A"/>
    <property type="chains" value="C=17-163"/>
</dbReference>
<dbReference type="PDB" id="2D2N">
    <property type="method" value="X-ray"/>
    <property type="resolution" value="3.20 A"/>
    <property type="chains" value="C=17-163"/>
</dbReference>
<dbReference type="PDB" id="2ZFO">
    <property type="method" value="X-ray"/>
    <property type="resolution" value="1.95 A"/>
    <property type="chains" value="C=17-163"/>
</dbReference>
<dbReference type="PDB" id="2ZS0">
    <property type="method" value="X-ray"/>
    <property type="resolution" value="1.60 A"/>
    <property type="chains" value="C=17-163"/>
</dbReference>
<dbReference type="PDB" id="2ZS1">
    <property type="method" value="X-ray"/>
    <property type="resolution" value="1.70 A"/>
    <property type="chains" value="C=17-163"/>
</dbReference>
<dbReference type="PDB" id="7E96">
    <property type="method" value="X-ray"/>
    <property type="resolution" value="2.40 A"/>
    <property type="chains" value="C=17-163"/>
</dbReference>
<dbReference type="PDB" id="7E97">
    <property type="method" value="X-ray"/>
    <property type="resolution" value="2.70 A"/>
    <property type="chains" value="C=17-163"/>
</dbReference>
<dbReference type="PDB" id="7E98">
    <property type="method" value="X-ray"/>
    <property type="resolution" value="2.20 A"/>
    <property type="chains" value="C=17-163"/>
</dbReference>
<dbReference type="PDB" id="7E99">
    <property type="method" value="X-ray"/>
    <property type="resolution" value="2.10 A"/>
    <property type="chains" value="C=17-163"/>
</dbReference>
<dbReference type="PDBsum" id="2D2M"/>
<dbReference type="PDBsum" id="2D2N"/>
<dbReference type="PDBsum" id="2ZFO"/>
<dbReference type="PDBsum" id="2ZS0"/>
<dbReference type="PDBsum" id="2ZS1"/>
<dbReference type="PDBsum" id="7E96"/>
<dbReference type="PDBsum" id="7E97"/>
<dbReference type="PDBsum" id="7E98"/>
<dbReference type="PDBsum" id="7E99"/>
<dbReference type="SMR" id="Q7M418"/>
<dbReference type="EvolutionaryTrace" id="Q7M418"/>
<dbReference type="GO" id="GO:0005576">
    <property type="term" value="C:extracellular region"/>
    <property type="evidence" value="ECO:0007669"/>
    <property type="project" value="UniProtKB-SubCell"/>
</dbReference>
<dbReference type="GO" id="GO:0005833">
    <property type="term" value="C:hemoglobin complex"/>
    <property type="evidence" value="ECO:0007669"/>
    <property type="project" value="InterPro"/>
</dbReference>
<dbReference type="GO" id="GO:0020037">
    <property type="term" value="F:heme binding"/>
    <property type="evidence" value="ECO:0007669"/>
    <property type="project" value="InterPro"/>
</dbReference>
<dbReference type="GO" id="GO:0005506">
    <property type="term" value="F:iron ion binding"/>
    <property type="evidence" value="ECO:0007669"/>
    <property type="project" value="InterPro"/>
</dbReference>
<dbReference type="GO" id="GO:0019825">
    <property type="term" value="F:oxygen binding"/>
    <property type="evidence" value="ECO:0007669"/>
    <property type="project" value="InterPro"/>
</dbReference>
<dbReference type="GO" id="GO:0005344">
    <property type="term" value="F:oxygen carrier activity"/>
    <property type="evidence" value="ECO:0007669"/>
    <property type="project" value="UniProtKB-KW"/>
</dbReference>
<dbReference type="CDD" id="cd01040">
    <property type="entry name" value="Mb-like"/>
    <property type="match status" value="1"/>
</dbReference>
<dbReference type="Gene3D" id="1.10.490.10">
    <property type="entry name" value="Globins"/>
    <property type="match status" value="1"/>
</dbReference>
<dbReference type="InterPro" id="IPR000971">
    <property type="entry name" value="Globin"/>
</dbReference>
<dbReference type="InterPro" id="IPR009050">
    <property type="entry name" value="Globin-like_sf"/>
</dbReference>
<dbReference type="InterPro" id="IPR012292">
    <property type="entry name" value="Globin/Proto"/>
</dbReference>
<dbReference type="InterPro" id="IPR014610">
    <property type="entry name" value="Haemoglobin_extracell"/>
</dbReference>
<dbReference type="InterPro" id="IPR044399">
    <property type="entry name" value="Mb-like_M"/>
</dbReference>
<dbReference type="PANTHER" id="PTHR47217">
    <property type="entry name" value="GLOBIN-LIKE PROTEIN"/>
    <property type="match status" value="1"/>
</dbReference>
<dbReference type="PANTHER" id="PTHR47217:SF1">
    <property type="entry name" value="GLOBIN-LIKE PROTEIN"/>
    <property type="match status" value="1"/>
</dbReference>
<dbReference type="Pfam" id="PF00042">
    <property type="entry name" value="Globin"/>
    <property type="match status" value="1"/>
</dbReference>
<dbReference type="PIRSF" id="PIRSF036517">
    <property type="entry name" value="Ext_hemo"/>
    <property type="match status" value="1"/>
</dbReference>
<dbReference type="SUPFAM" id="SSF46458">
    <property type="entry name" value="Globin-like"/>
    <property type="match status" value="1"/>
</dbReference>
<dbReference type="PROSITE" id="PS01033">
    <property type="entry name" value="GLOBIN"/>
    <property type="match status" value="1"/>
</dbReference>
<organism>
    <name type="scientific">Oligobrachia mashikoi</name>
    <name type="common">Beard worm</name>
    <dbReference type="NCBI Taxonomy" id="55676"/>
    <lineage>
        <taxon>Eukaryota</taxon>
        <taxon>Metazoa</taxon>
        <taxon>Spiralia</taxon>
        <taxon>Lophotrochozoa</taxon>
        <taxon>Annelida</taxon>
        <taxon>Polychaeta</taxon>
        <taxon>Sedentaria</taxon>
        <taxon>Canalipalpata</taxon>
        <taxon>Sabellida</taxon>
        <taxon>Siboglinidae</taxon>
        <taxon>Oligobrachia</taxon>
    </lineage>
</organism>
<proteinExistence type="evidence at protein level"/>
<protein>
    <recommendedName>
        <fullName>Extracellular giant hemoglobin major globin subunit B2</fullName>
    </recommendedName>
    <alternativeName>
        <fullName>Major globin chain c</fullName>
    </alternativeName>
</protein>
<reference key="1">
    <citation type="journal article" date="2005" name="Zool. Sci.">
        <title>Purification, characterization and sequence analyses of the extracellular giant hemoglobin from Oligobrachia mashikoi.</title>
        <authorList>
            <person name="Nakagawa T."/>
            <person name="Onoda S."/>
            <person name="Kanemori M."/>
            <person name="Sasayama Y."/>
            <person name="Fukumori Y."/>
        </authorList>
    </citation>
    <scope>NUCLEOTIDE SEQUENCE [MRNA]</scope>
    <scope>PROTEIN SEQUENCE OF 17-39</scope>
</reference>
<reference key="2">
    <citation type="journal article" date="1996" name="Biochim. Biophys. Acta">
        <title>Electrospray ionization mass spectrometric composition of the 400 kDa hemoglobin from the pogonophoran Oligobrachia mashikoi and the primary structures of three major globin chains.</title>
        <authorList>
            <person name="Yuasa H.J."/>
            <person name="Green B.N."/>
            <person name="Takagi T."/>
            <person name="Suzuki N."/>
            <person name="Vinogradov S.N."/>
            <person name="Suzuki T."/>
        </authorList>
    </citation>
    <scope>NUCLEOTIDE SEQUENCE [MRNA] OF 35-163</scope>
    <scope>PROTEIN SEQUENCE OF 17-47</scope>
    <scope>IDENTIFICATION BY MASS SPECTROMETRY</scope>
</reference>
<reference key="3">
    <citation type="journal article" date="2005" name="Proc. Natl. Acad. Sci. U.S.A.">
        <title>Structure of an extracellular giant hemoglobin of the gutless beard worm Oligobrachia mashikoi.</title>
        <authorList>
            <person name="Numoto N."/>
            <person name="Nakagawa T."/>
            <person name="Kita A."/>
            <person name="Sasayama Y."/>
            <person name="Fukumori Y."/>
            <person name="Miki K."/>
        </authorList>
    </citation>
    <scope>X-RAY CRYSTALLOGRAPHY (2.85 ANGSTROMS) OF 17-163</scope>
    <scope>SUBUNIT</scope>
    <scope>METAL</scope>
    <scope>DISULFIDE BONDS</scope>
</reference>
<name>GLBB2_OLIMA</name>
<accession>Q7M418</accession>
<accession>Q5KSB8</accession>
<feature type="signal peptide" evidence="2 4">
    <location>
        <begin position="1"/>
        <end position="16"/>
    </location>
</feature>
<feature type="chain" id="PRO_0000052519" description="Extracellular giant hemoglobin major globin subunit B2">
    <location>
        <begin position="17"/>
        <end position="163"/>
    </location>
</feature>
<feature type="domain" description="Globin" evidence="1">
    <location>
        <begin position="19"/>
        <end position="163"/>
    </location>
</feature>
<feature type="binding site" evidence="5">
    <location>
        <position position="83"/>
    </location>
    <ligand>
        <name>hydrogen sulfide</name>
        <dbReference type="ChEBI" id="CHEBI:29919"/>
    </ligand>
</feature>
<feature type="binding site" description="proximal binding residue">
    <location>
        <position position="114"/>
    </location>
    <ligand>
        <name>heme b</name>
        <dbReference type="ChEBI" id="CHEBI:60344"/>
    </ligand>
    <ligandPart>
        <name>Fe</name>
        <dbReference type="ChEBI" id="CHEBI:18248"/>
    </ligandPart>
</feature>
<feature type="disulfide bond" description="Interchain (with C-18 in subunit B1)" evidence="3">
    <location>
        <position position="19"/>
    </location>
</feature>
<feature type="disulfide bond" evidence="3">
    <location>
        <begin position="20"/>
        <end position="151"/>
    </location>
</feature>
<feature type="disulfide bond" description="Interchain (with C-137 in subunit A1)" evidence="3">
    <location>
        <position position="142"/>
    </location>
</feature>
<feature type="sequence conflict" description="In Ref. 1; AA sequence." evidence="5" ref="1">
    <original>S</original>
    <variation>N</variation>
    <location>
        <position position="22"/>
    </location>
</feature>
<feature type="helix" evidence="8">
    <location>
        <begin position="22"/>
        <end position="36"/>
    </location>
</feature>
<feature type="strand" evidence="8">
    <location>
        <begin position="40"/>
        <end position="43"/>
    </location>
</feature>
<feature type="helix" evidence="8">
    <location>
        <begin position="44"/>
        <end position="58"/>
    </location>
</feature>
<feature type="helix" evidence="8">
    <location>
        <begin position="60"/>
        <end position="69"/>
    </location>
</feature>
<feature type="turn" evidence="8">
    <location>
        <begin position="70"/>
        <end position="72"/>
    </location>
</feature>
<feature type="helix" evidence="8">
    <location>
        <begin position="77"/>
        <end position="94"/>
    </location>
</feature>
<feature type="turn" evidence="8">
    <location>
        <begin position="95"/>
        <end position="98"/>
    </location>
</feature>
<feature type="helix" evidence="8">
    <location>
        <begin position="100"/>
        <end position="115"/>
    </location>
</feature>
<feature type="strand" evidence="6">
    <location>
        <begin position="117"/>
        <end position="119"/>
    </location>
</feature>
<feature type="helix" evidence="8">
    <location>
        <begin position="122"/>
        <end position="139"/>
    </location>
</feature>
<feature type="strand" evidence="7">
    <location>
        <begin position="140"/>
        <end position="142"/>
    </location>
</feature>
<feature type="helix" evidence="8">
    <location>
        <begin position="145"/>
        <end position="160"/>
    </location>
</feature>